<keyword id="KW-0143">Chaperone</keyword>
<keyword id="KW-0963">Cytoplasm</keyword>
<keyword id="KW-1185">Reference proteome</keyword>
<keyword id="KW-0690">Ribosome biogenesis</keyword>
<keyword id="KW-0698">rRNA processing</keyword>
<evidence type="ECO:0000255" key="1">
    <source>
        <dbReference type="HAMAP-Rule" id="MF_00014"/>
    </source>
</evidence>
<gene>
    <name evidence="1" type="primary">rimM</name>
    <name type="ordered locus">Francci3_3592</name>
</gene>
<sequence length="179" mass="18807">MAEEIVVGRIGRPHGIRGEVTIEIRTDVPHRRFVVGAVLGREGGGTALTVSGAHWHSGRLLLHFRGVDDRGAAEALRGVLLTIDADQAGSPLDDADGDGEAVEMWWDRDLVGLRAVTTAGMLLGHVTDIIHSPAGDLLAIGGPDGGEHLVPFVRDIVPTVDPPAGRIVVDPPPGLLDLD</sequence>
<reference key="1">
    <citation type="journal article" date="2007" name="Genome Res.">
        <title>Genome characteristics of facultatively symbiotic Frankia sp. strains reflect host range and host plant biogeography.</title>
        <authorList>
            <person name="Normand P."/>
            <person name="Lapierre P."/>
            <person name="Tisa L.S."/>
            <person name="Gogarten J.P."/>
            <person name="Alloisio N."/>
            <person name="Bagnarol E."/>
            <person name="Bassi C.A."/>
            <person name="Berry A.M."/>
            <person name="Bickhart D.M."/>
            <person name="Choisne N."/>
            <person name="Couloux A."/>
            <person name="Cournoyer B."/>
            <person name="Cruveiller S."/>
            <person name="Daubin V."/>
            <person name="Demange N."/>
            <person name="Francino M.P."/>
            <person name="Goltsman E."/>
            <person name="Huang Y."/>
            <person name="Kopp O.R."/>
            <person name="Labarre L."/>
            <person name="Lapidus A."/>
            <person name="Lavire C."/>
            <person name="Marechal J."/>
            <person name="Martinez M."/>
            <person name="Mastronunzio J.E."/>
            <person name="Mullin B.C."/>
            <person name="Niemann J."/>
            <person name="Pujic P."/>
            <person name="Rawnsley T."/>
            <person name="Rouy Z."/>
            <person name="Schenowitz C."/>
            <person name="Sellstedt A."/>
            <person name="Tavares F."/>
            <person name="Tomkins J.P."/>
            <person name="Vallenet D."/>
            <person name="Valverde C."/>
            <person name="Wall L.G."/>
            <person name="Wang Y."/>
            <person name="Medigue C."/>
            <person name="Benson D.R."/>
        </authorList>
    </citation>
    <scope>NUCLEOTIDE SEQUENCE [LARGE SCALE GENOMIC DNA]</scope>
    <source>
        <strain>DSM 45818 / CECT 9043 / HFP020203 / CcI3</strain>
    </source>
</reference>
<organism>
    <name type="scientific">Frankia casuarinae (strain DSM 45818 / CECT 9043 / HFP020203 / CcI3)</name>
    <dbReference type="NCBI Taxonomy" id="106370"/>
    <lineage>
        <taxon>Bacteria</taxon>
        <taxon>Bacillati</taxon>
        <taxon>Actinomycetota</taxon>
        <taxon>Actinomycetes</taxon>
        <taxon>Frankiales</taxon>
        <taxon>Frankiaceae</taxon>
        <taxon>Frankia</taxon>
    </lineage>
</organism>
<comment type="function">
    <text evidence="1">An accessory protein needed during the final step in the assembly of 30S ribosomal subunit, possibly for assembly of the head region. Essential for efficient processing of 16S rRNA. May be needed both before and after RbfA during the maturation of 16S rRNA. It has affinity for free ribosomal 30S subunits but not for 70S ribosomes.</text>
</comment>
<comment type="subunit">
    <text evidence="1">Binds ribosomal protein uS19.</text>
</comment>
<comment type="subcellular location">
    <subcellularLocation>
        <location evidence="1">Cytoplasm</location>
    </subcellularLocation>
</comment>
<comment type="domain">
    <text evidence="1">The PRC barrel domain binds ribosomal protein uS19.</text>
</comment>
<comment type="similarity">
    <text evidence="1">Belongs to the RimM family.</text>
</comment>
<protein>
    <recommendedName>
        <fullName evidence="1">Ribosome maturation factor RimM</fullName>
    </recommendedName>
</protein>
<accession>Q2J6Z8</accession>
<name>RIMM_FRACC</name>
<proteinExistence type="inferred from homology"/>
<dbReference type="EMBL" id="CP000249">
    <property type="protein sequence ID" value="ABD12944.1"/>
    <property type="molecule type" value="Genomic_DNA"/>
</dbReference>
<dbReference type="RefSeq" id="WP_011437968.1">
    <property type="nucleotide sequence ID" value="NZ_MSEA01000455.1"/>
</dbReference>
<dbReference type="SMR" id="Q2J6Z8"/>
<dbReference type="STRING" id="106370.Francci3_3592"/>
<dbReference type="KEGG" id="fra:Francci3_3592"/>
<dbReference type="eggNOG" id="COG0806">
    <property type="taxonomic scope" value="Bacteria"/>
</dbReference>
<dbReference type="HOGENOM" id="CLU_077636_0_0_11"/>
<dbReference type="OrthoDB" id="5381335at2"/>
<dbReference type="PhylomeDB" id="Q2J6Z8"/>
<dbReference type="Proteomes" id="UP000001937">
    <property type="component" value="Chromosome"/>
</dbReference>
<dbReference type="GO" id="GO:0005737">
    <property type="term" value="C:cytoplasm"/>
    <property type="evidence" value="ECO:0007669"/>
    <property type="project" value="UniProtKB-SubCell"/>
</dbReference>
<dbReference type="GO" id="GO:0005840">
    <property type="term" value="C:ribosome"/>
    <property type="evidence" value="ECO:0007669"/>
    <property type="project" value="InterPro"/>
</dbReference>
<dbReference type="GO" id="GO:0043022">
    <property type="term" value="F:ribosome binding"/>
    <property type="evidence" value="ECO:0007669"/>
    <property type="project" value="InterPro"/>
</dbReference>
<dbReference type="GO" id="GO:0042274">
    <property type="term" value="P:ribosomal small subunit biogenesis"/>
    <property type="evidence" value="ECO:0007669"/>
    <property type="project" value="UniProtKB-UniRule"/>
</dbReference>
<dbReference type="GO" id="GO:0006364">
    <property type="term" value="P:rRNA processing"/>
    <property type="evidence" value="ECO:0007669"/>
    <property type="project" value="UniProtKB-UniRule"/>
</dbReference>
<dbReference type="Gene3D" id="2.30.30.240">
    <property type="entry name" value="PRC-barrel domain"/>
    <property type="match status" value="1"/>
</dbReference>
<dbReference type="Gene3D" id="2.40.30.60">
    <property type="entry name" value="RimM"/>
    <property type="match status" value="1"/>
</dbReference>
<dbReference type="HAMAP" id="MF_00014">
    <property type="entry name" value="Ribosome_mat_RimM"/>
    <property type="match status" value="1"/>
</dbReference>
<dbReference type="InterPro" id="IPR011033">
    <property type="entry name" value="PRC_barrel-like_sf"/>
</dbReference>
<dbReference type="InterPro" id="IPR056792">
    <property type="entry name" value="PRC_RimM"/>
</dbReference>
<dbReference type="InterPro" id="IPR011961">
    <property type="entry name" value="RimM"/>
</dbReference>
<dbReference type="InterPro" id="IPR002676">
    <property type="entry name" value="RimM_N"/>
</dbReference>
<dbReference type="InterPro" id="IPR036976">
    <property type="entry name" value="RimM_N_sf"/>
</dbReference>
<dbReference type="InterPro" id="IPR009000">
    <property type="entry name" value="Transl_B-barrel_sf"/>
</dbReference>
<dbReference type="NCBIfam" id="TIGR02273">
    <property type="entry name" value="16S_RimM"/>
    <property type="match status" value="1"/>
</dbReference>
<dbReference type="PANTHER" id="PTHR33692">
    <property type="entry name" value="RIBOSOME MATURATION FACTOR RIMM"/>
    <property type="match status" value="1"/>
</dbReference>
<dbReference type="PANTHER" id="PTHR33692:SF1">
    <property type="entry name" value="RIBOSOME MATURATION FACTOR RIMM"/>
    <property type="match status" value="1"/>
</dbReference>
<dbReference type="Pfam" id="PF24986">
    <property type="entry name" value="PRC_RimM"/>
    <property type="match status" value="1"/>
</dbReference>
<dbReference type="Pfam" id="PF01782">
    <property type="entry name" value="RimM"/>
    <property type="match status" value="1"/>
</dbReference>
<dbReference type="SUPFAM" id="SSF50346">
    <property type="entry name" value="PRC-barrel domain"/>
    <property type="match status" value="1"/>
</dbReference>
<dbReference type="SUPFAM" id="SSF50447">
    <property type="entry name" value="Translation proteins"/>
    <property type="match status" value="1"/>
</dbReference>
<feature type="chain" id="PRO_0000244132" description="Ribosome maturation factor RimM">
    <location>
        <begin position="1"/>
        <end position="179"/>
    </location>
</feature>
<feature type="domain" description="PRC barrel" evidence="1">
    <location>
        <begin position="102"/>
        <end position="175"/>
    </location>
</feature>